<proteinExistence type="inferred from homology"/>
<gene>
    <name type="primary">LCAT</name>
</gene>
<dbReference type="EC" id="2.3.1.43" evidence="2"/>
<dbReference type="EMBL" id="AH005247">
    <property type="protein sequence ID" value="AAB58990.1"/>
    <property type="molecule type" value="Genomic_DNA"/>
</dbReference>
<dbReference type="SMR" id="O35502"/>
<dbReference type="GlyCosmos" id="O35502">
    <property type="glycosylation" value="3 sites, No reported glycans"/>
</dbReference>
<dbReference type="GO" id="GO:0005576">
    <property type="term" value="C:extracellular region"/>
    <property type="evidence" value="ECO:0007669"/>
    <property type="project" value="UniProtKB-SubCell"/>
</dbReference>
<dbReference type="GO" id="GO:0004607">
    <property type="term" value="F:phosphatidylcholine-sterol O-acyltransferase activity"/>
    <property type="evidence" value="ECO:0000250"/>
    <property type="project" value="UniProtKB"/>
</dbReference>
<dbReference type="GO" id="GO:0008203">
    <property type="term" value="P:cholesterol metabolic process"/>
    <property type="evidence" value="ECO:0000250"/>
    <property type="project" value="UniProtKB"/>
</dbReference>
<dbReference type="GO" id="GO:0046470">
    <property type="term" value="P:phosphatidylcholine metabolic process"/>
    <property type="evidence" value="ECO:0000250"/>
    <property type="project" value="UniProtKB"/>
</dbReference>
<dbReference type="FunFam" id="3.40.50.1820:FF:000720">
    <property type="entry name" value="Phosphatidylcholine-sterol acyltransferase"/>
    <property type="match status" value="1"/>
</dbReference>
<dbReference type="Gene3D" id="3.40.50.1820">
    <property type="entry name" value="alpha/beta hydrolase"/>
    <property type="match status" value="1"/>
</dbReference>
<dbReference type="InterPro" id="IPR029058">
    <property type="entry name" value="AB_hydrolase_fold"/>
</dbReference>
<dbReference type="InterPro" id="IPR003386">
    <property type="entry name" value="LACT/PDAT_acylTrfase"/>
</dbReference>
<dbReference type="PANTHER" id="PTHR11440">
    <property type="entry name" value="LECITHIN-CHOLESTEROL ACYLTRANSFERASE-RELATED"/>
    <property type="match status" value="1"/>
</dbReference>
<dbReference type="Pfam" id="PF02450">
    <property type="entry name" value="LCAT"/>
    <property type="match status" value="2"/>
</dbReference>
<dbReference type="SUPFAM" id="SSF53474">
    <property type="entry name" value="alpha/beta-Hydrolases"/>
    <property type="match status" value="1"/>
</dbReference>
<dbReference type="PROSITE" id="PS00120">
    <property type="entry name" value="LIPASE_SER"/>
    <property type="match status" value="1"/>
</dbReference>
<feature type="chain" id="PRO_0000090358" description="Phosphatidylcholine-sterol acyltransferase">
    <location>
        <begin position="1" status="less than"/>
        <end position="291" status="greater than"/>
    </location>
</feature>
<feature type="active site" description="Nucleophile" evidence="2">
    <location>
        <position position="125"/>
    </location>
</feature>
<feature type="active site" description="Charge relay system" evidence="2">
    <location>
        <position position="252"/>
    </location>
</feature>
<feature type="site" description="Determinant for substrate specificity" evidence="2">
    <location>
        <position position="93"/>
    </location>
</feature>
<feature type="glycosylation site" description="N-linked (GlcNAc...) asparagine" evidence="3">
    <location>
        <position position="28"/>
    </location>
</feature>
<feature type="glycosylation site" description="N-linked (GlcNAc...) asparagine" evidence="3">
    <location>
        <position position="179"/>
    </location>
</feature>
<feature type="glycosylation site" description="N-linked (GlcNAc...) asparagine" evidence="3">
    <location>
        <position position="280"/>
    </location>
</feature>
<feature type="disulfide bond" evidence="2">
    <location>
        <begin position="220"/>
        <end position="263"/>
    </location>
</feature>
<feature type="non-terminal residue">
    <location>
        <position position="1"/>
    </location>
</feature>
<feature type="non-terminal residue">
    <location>
        <position position="291"/>
    </location>
</feature>
<organism>
    <name type="scientific">Myodes glareolus</name>
    <name type="common">Bank vole</name>
    <name type="synonym">Clethrionomys glareolus</name>
    <dbReference type="NCBI Taxonomy" id="447135"/>
    <lineage>
        <taxon>Eukaryota</taxon>
        <taxon>Metazoa</taxon>
        <taxon>Chordata</taxon>
        <taxon>Craniata</taxon>
        <taxon>Vertebrata</taxon>
        <taxon>Euteleostomi</taxon>
        <taxon>Mammalia</taxon>
        <taxon>Eutheria</taxon>
        <taxon>Euarchontoglires</taxon>
        <taxon>Glires</taxon>
        <taxon>Rodentia</taxon>
        <taxon>Myomorpha</taxon>
        <taxon>Muroidea</taxon>
        <taxon>Cricetidae</taxon>
        <taxon>Arvicolinae</taxon>
        <taxon>Myodes</taxon>
    </lineage>
</organism>
<protein>
    <recommendedName>
        <fullName>Phosphatidylcholine-sterol acyltransferase</fullName>
        <ecNumber evidence="2">2.3.1.43</ecNumber>
    </recommendedName>
    <alternativeName>
        <fullName>Lecithin-cholesterol acyltransferase</fullName>
    </alternativeName>
    <alternativeName>
        <fullName>Phospholipid-cholesterol acyltransferase</fullName>
    </alternativeName>
</protein>
<comment type="function">
    <text evidence="2">Central enzyme in the extracellular metabolism of plasma lipoproteins. Synthesized mainly in the liver and secreted into plasma where it converts cholesterol and phosphatidylcholines (lecithins) to cholesteryl esters and lysophosphatidylcholines on the surface of high and low density lipoproteins (HDLs and LDLs). The cholesterol ester is then transported back to the liver. Has a preference for plasma 16:0-18:2 or 18:O-18:2 phosphatidylcholines. Also produced in the brain by primary astrocytes, and esterifies free cholesterol on nascent APOE-containing lipoproteins secreted from glia and influences cerebral spinal fluid (CSF) APOE- and APOA1 levels. Together with APOE and the cholesterol transporter ABCA1, plays a key role in the maturation of glial-derived, nascent lipoproteins. Required for remodeling high-density lipoprotein particles into their spherical forms (By similarity).</text>
</comment>
<comment type="catalytic activity">
    <reaction evidence="2 4">
        <text>a sterol + a 1,2-diacyl-sn-glycero-3-phosphocholine = a sterol ester + a 1-acyl-sn-glycero-3-phosphocholine</text>
        <dbReference type="Rhea" id="RHEA:21204"/>
        <dbReference type="ChEBI" id="CHEBI:15889"/>
        <dbReference type="ChEBI" id="CHEBI:35915"/>
        <dbReference type="ChEBI" id="CHEBI:57643"/>
        <dbReference type="ChEBI" id="CHEBI:58168"/>
        <dbReference type="EC" id="2.3.1.43"/>
    </reaction>
</comment>
<comment type="activity regulation">
    <text evidence="1">APOA1 is the most potent activator in plasma. Also activated by APOE, APOC1 and APOA4 (By similarity).</text>
</comment>
<comment type="subcellular location">
    <subcellularLocation>
        <location evidence="2">Secreted</location>
    </subcellularLocation>
    <text evidence="2">Secreted into blood plasma. Produced in astrocytes and secreted into cerebral spinal fluid (CSF) (By similarity).</text>
</comment>
<comment type="similarity">
    <text evidence="5">Belongs to the AB hydrolase superfamily. Lipase family.</text>
</comment>
<name>LCAT_MYOGA</name>
<accession>O35502</accession>
<reference key="1">
    <citation type="journal article" date="1997" name="Mol. Phylogenet. Evol.">
        <title>Molecular phylogeny of rodents, with special emphasis on murids: evidence from nuclear gene LCAT.</title>
        <authorList>
            <person name="Robinson M."/>
            <person name="Catzeflis F."/>
            <person name="Briolay J."/>
            <person name="Mouchiroud D."/>
        </authorList>
    </citation>
    <scope>NUCLEOTIDE SEQUENCE [GENOMIC DNA]</scope>
</reference>
<sequence length="291" mass="33536">FFTIFLDLNMFLALGVNCWIDNTRVVYNRSSGRMSNAPCVQIRVPGFGKTYSVEYLDDNKLAGYMHTLVQNLVNNGYVRDETVLAAPYDWRLEPSQQEEYYQKLAGLVEEMHAAYGKPVFLIGHSVGCLHVLYFNQGIPIMSSIKLREEQRITTTSPWMFPARRVWPEDHVFISTPNFNYTGQDFKRFFEDLYFEEGWYMWLQSRDLLAGLPAPGVEVYCLYGVGLPTPSTYIYDHSFPYKDPVAALYEDGDDTVATRSTELCGQVQGSQSQPVHWLPMNWTEQLNMLFSN</sequence>
<evidence type="ECO:0000250" key="1"/>
<evidence type="ECO:0000250" key="2">
    <source>
        <dbReference type="UniProtKB" id="P04180"/>
    </source>
</evidence>
<evidence type="ECO:0000255" key="3"/>
<evidence type="ECO:0000255" key="4">
    <source>
        <dbReference type="PROSITE-ProRule" id="PRU10037"/>
    </source>
</evidence>
<evidence type="ECO:0000305" key="5"/>
<keyword id="KW-0012">Acyltransferase</keyword>
<keyword id="KW-0153">Cholesterol metabolism</keyword>
<keyword id="KW-1015">Disulfide bond</keyword>
<keyword id="KW-0325">Glycoprotein</keyword>
<keyword id="KW-0443">Lipid metabolism</keyword>
<keyword id="KW-0964">Secreted</keyword>
<keyword id="KW-0753">Steroid metabolism</keyword>
<keyword id="KW-1207">Sterol metabolism</keyword>
<keyword id="KW-0808">Transferase</keyword>